<evidence type="ECO:0000250" key="1">
    <source>
        <dbReference type="UniProtKB" id="O15400"/>
    </source>
</evidence>
<evidence type="ECO:0000255" key="2"/>
<evidence type="ECO:0000255" key="3">
    <source>
        <dbReference type="PROSITE-ProRule" id="PRU00202"/>
    </source>
</evidence>
<evidence type="ECO:0000256" key="4">
    <source>
        <dbReference type="SAM" id="MobiDB-lite"/>
    </source>
</evidence>
<evidence type="ECO:0000269" key="5">
    <source>
    </source>
</evidence>
<evidence type="ECO:0000269" key="6">
    <source>
    </source>
</evidence>
<evidence type="ECO:0000305" key="7"/>
<evidence type="ECO:0000312" key="8">
    <source>
        <dbReference type="dictyBase" id="DDB_G0287733"/>
    </source>
</evidence>
<evidence type="ECO:0000312" key="9">
    <source>
        <dbReference type="EMBL" id="EAL63513.1"/>
    </source>
</evidence>
<organism>
    <name type="scientific">Dictyostelium discoideum</name>
    <name type="common">Social amoeba</name>
    <dbReference type="NCBI Taxonomy" id="44689"/>
    <lineage>
        <taxon>Eukaryota</taxon>
        <taxon>Amoebozoa</taxon>
        <taxon>Evosea</taxon>
        <taxon>Eumycetozoa</taxon>
        <taxon>Dictyostelia</taxon>
        <taxon>Dictyosteliales</taxon>
        <taxon>Dictyosteliaceae</taxon>
        <taxon>Dictyostelium</taxon>
    </lineage>
</organism>
<name>STX7A_DICDI</name>
<keyword id="KW-0175">Coiled coil</keyword>
<keyword id="KW-0967">Endosome</keyword>
<keyword id="KW-0472">Membrane</keyword>
<keyword id="KW-0597">Phosphoprotein</keyword>
<keyword id="KW-1185">Reference proteome</keyword>
<keyword id="KW-0735">Signal-anchor</keyword>
<keyword id="KW-0812">Transmembrane</keyword>
<keyword id="KW-1133">Transmembrane helix</keyword>
<keyword id="KW-0813">Transport</keyword>
<gene>
    <name evidence="9" type="primary">syn7A</name>
    <name evidence="8" type="synonym">syn7</name>
    <name type="ORF">DDB_G0287733</name>
</gene>
<dbReference type="EMBL" id="AAFI02000104">
    <property type="protein sequence ID" value="EAL63513.1"/>
    <property type="molecule type" value="Genomic_DNA"/>
</dbReference>
<dbReference type="RefSeq" id="XP_637015.1">
    <property type="nucleotide sequence ID" value="XM_631923.1"/>
</dbReference>
<dbReference type="SMR" id="Q54JY7"/>
<dbReference type="FunCoup" id="Q54JY7">
    <property type="interactions" value="612"/>
</dbReference>
<dbReference type="IntAct" id="Q54JY7">
    <property type="interactions" value="8"/>
</dbReference>
<dbReference type="STRING" id="44689.Q54JY7"/>
<dbReference type="PaxDb" id="44689-DDB0231537"/>
<dbReference type="EnsemblProtists" id="EAL63513">
    <property type="protein sequence ID" value="EAL63513"/>
    <property type="gene ID" value="DDB_G0287733"/>
</dbReference>
<dbReference type="GeneID" id="8626270"/>
<dbReference type="KEGG" id="ddi:DDB_G0287733"/>
<dbReference type="dictyBase" id="DDB_G0287733">
    <property type="gene designation" value="syn7A"/>
</dbReference>
<dbReference type="VEuPathDB" id="AmoebaDB:DDB_G0287733"/>
<dbReference type="eggNOG" id="KOG0811">
    <property type="taxonomic scope" value="Eukaryota"/>
</dbReference>
<dbReference type="HOGENOM" id="CLU_779444_0_0_1"/>
<dbReference type="InParanoid" id="Q54JY7"/>
<dbReference type="OMA" id="LMTYTKQ"/>
<dbReference type="PhylomeDB" id="Q54JY7"/>
<dbReference type="Reactome" id="R-DDI-204005">
    <property type="pathway name" value="COPII-mediated vesicle transport"/>
</dbReference>
<dbReference type="PRO" id="PR:Q54JY7"/>
<dbReference type="Proteomes" id="UP000002195">
    <property type="component" value="Chromosome 5"/>
</dbReference>
<dbReference type="GO" id="GO:0030666">
    <property type="term" value="C:endocytic vesicle membrane"/>
    <property type="evidence" value="ECO:0000314"/>
    <property type="project" value="dictyBase"/>
</dbReference>
<dbReference type="GO" id="GO:0012505">
    <property type="term" value="C:endomembrane system"/>
    <property type="evidence" value="ECO:0000318"/>
    <property type="project" value="GO_Central"/>
</dbReference>
<dbReference type="GO" id="GO:0005768">
    <property type="term" value="C:endosome"/>
    <property type="evidence" value="ECO:0000314"/>
    <property type="project" value="dictyBase"/>
</dbReference>
<dbReference type="GO" id="GO:0010008">
    <property type="term" value="C:endosome membrane"/>
    <property type="evidence" value="ECO:0000314"/>
    <property type="project" value="UniProtKB"/>
</dbReference>
<dbReference type="GO" id="GO:0031201">
    <property type="term" value="C:SNARE complex"/>
    <property type="evidence" value="ECO:0000318"/>
    <property type="project" value="GO_Central"/>
</dbReference>
<dbReference type="GO" id="GO:0005484">
    <property type="term" value="F:SNAP receptor activity"/>
    <property type="evidence" value="ECO:0000318"/>
    <property type="project" value="GO_Central"/>
</dbReference>
<dbReference type="GO" id="GO:0000149">
    <property type="term" value="F:SNARE binding"/>
    <property type="evidence" value="ECO:0000318"/>
    <property type="project" value="GO_Central"/>
</dbReference>
<dbReference type="GO" id="GO:0008333">
    <property type="term" value="P:endosome to lysosome transport"/>
    <property type="evidence" value="ECO:0000314"/>
    <property type="project" value="UniProtKB"/>
</dbReference>
<dbReference type="GO" id="GO:0006971">
    <property type="term" value="P:hypotonic response"/>
    <property type="evidence" value="ECO:0007007"/>
    <property type="project" value="dictyBase"/>
</dbReference>
<dbReference type="GO" id="GO:0006886">
    <property type="term" value="P:intracellular protein transport"/>
    <property type="evidence" value="ECO:0000318"/>
    <property type="project" value="GO_Central"/>
</dbReference>
<dbReference type="GO" id="GO:0048278">
    <property type="term" value="P:vesicle docking"/>
    <property type="evidence" value="ECO:0000318"/>
    <property type="project" value="GO_Central"/>
</dbReference>
<dbReference type="GO" id="GO:0006906">
    <property type="term" value="P:vesicle fusion"/>
    <property type="evidence" value="ECO:0000314"/>
    <property type="project" value="dictyBase"/>
</dbReference>
<dbReference type="GO" id="GO:0016192">
    <property type="term" value="P:vesicle-mediated transport"/>
    <property type="evidence" value="ECO:0000314"/>
    <property type="project" value="UniProtKB"/>
</dbReference>
<dbReference type="CDD" id="cd15840">
    <property type="entry name" value="SNARE_Qa"/>
    <property type="match status" value="1"/>
</dbReference>
<dbReference type="Gene3D" id="1.20.5.110">
    <property type="match status" value="1"/>
</dbReference>
<dbReference type="Gene3D" id="1.20.58.70">
    <property type="match status" value="1"/>
</dbReference>
<dbReference type="InterPro" id="IPR010989">
    <property type="entry name" value="SNARE"/>
</dbReference>
<dbReference type="InterPro" id="IPR045242">
    <property type="entry name" value="Syntaxin"/>
</dbReference>
<dbReference type="InterPro" id="IPR006012">
    <property type="entry name" value="Syntaxin/epimorphin_CS"/>
</dbReference>
<dbReference type="InterPro" id="IPR006011">
    <property type="entry name" value="Syntaxin_N"/>
</dbReference>
<dbReference type="InterPro" id="IPR000727">
    <property type="entry name" value="T_SNARE_dom"/>
</dbReference>
<dbReference type="PANTHER" id="PTHR19957:SF38">
    <property type="entry name" value="LD27581P"/>
    <property type="match status" value="1"/>
</dbReference>
<dbReference type="PANTHER" id="PTHR19957">
    <property type="entry name" value="SYNTAXIN"/>
    <property type="match status" value="1"/>
</dbReference>
<dbReference type="Pfam" id="PF05739">
    <property type="entry name" value="SNARE"/>
    <property type="match status" value="1"/>
</dbReference>
<dbReference type="Pfam" id="PF14523">
    <property type="entry name" value="Syntaxin_2"/>
    <property type="match status" value="1"/>
</dbReference>
<dbReference type="SMART" id="SM00397">
    <property type="entry name" value="t_SNARE"/>
    <property type="match status" value="1"/>
</dbReference>
<dbReference type="SUPFAM" id="SSF47661">
    <property type="entry name" value="t-snare proteins"/>
    <property type="match status" value="1"/>
</dbReference>
<dbReference type="PROSITE" id="PS00914">
    <property type="entry name" value="SYNTAXIN"/>
    <property type="match status" value="1"/>
</dbReference>
<dbReference type="PROSITE" id="PS50192">
    <property type="entry name" value="T_SNARE"/>
    <property type="match status" value="1"/>
</dbReference>
<comment type="function">
    <text evidence="1 5 6">Involved in the targeting and/or fusion of transport vesicles to their target membrane during transport of proteins from the early endosome to the lysosome. Required for fusion of late endosomes with lysosomes and homotypic lysosomal fusion. May be involved in protein trafficking from the plasma membrane to the early endosome (EE) as well as in homotypic fusion of endocytic organelles.</text>
</comment>
<comment type="subunit">
    <text evidence="5 6">Component of the SNARE complex composed of syn7A, syn8A, vamp7A and vti1A. Interacts with nsfA, snpA and snpC.</text>
</comment>
<comment type="interaction">
    <interactant intactId="EBI-1810238">
        <id>Q54JY7</id>
    </interactant>
    <interactant intactId="EBI-1810142">
        <id>Q75JI3</id>
        <label>nsfA</label>
    </interactant>
    <organismsDiffer>false</organismsDiffer>
    <experiments>2</experiments>
</comment>
<comment type="interaction">
    <interactant intactId="EBI-1810238">
        <id>Q54JY7</id>
    </interactant>
    <interactant intactId="EBI-1810311">
        <id>Q54NW7</id>
        <label>vamp7A</label>
    </interactant>
    <organismsDiffer>false</organismsDiffer>
    <experiments>6</experiments>
</comment>
<comment type="subcellular location">
    <subcellularLocation>
        <location evidence="5 6">Endosome membrane</location>
        <topology evidence="2 5 6">Single-pass membrane protein</topology>
    </subcellularLocation>
</comment>
<comment type="similarity">
    <text evidence="2">Belongs to the syntaxin family.</text>
</comment>
<accession>Q54JY7</accession>
<sequence length="356" mass="40219">MYNNNNNFGGGGYNQGGGYNSGGYNNNGGGYNNNNGGYNNNNNNNGGYNNNRPQQQQQQQQQYVNNNNNSFDNNGYGGDDDVTNNSDYQSTTRNIQQIQNAVQILTKLVQLLGTPKDSMDTREKIRNCVDSTTHLISSESGKVKNLTSLASRSRDSKNKLLYQKLVKEFNNCLQQFKDIAQVATKKEKTTPLPVAPDHQQPTTFGRNNNSNNNNQNNHFLNNQQPYYDDDNREDEHQSLMESSRRQQLAQIEAEREYQNSIIQERDEGIRKIEQSIVEINEIFVDLSGLVAEQGVMINTIEASLESTTINTKEGVNHLREASKNQKSSRNKMCWIVLILLIVCAVLGVILFFTLRK</sequence>
<reference evidence="9" key="1">
    <citation type="journal article" date="2005" name="Nature">
        <title>The genome of the social amoeba Dictyostelium discoideum.</title>
        <authorList>
            <person name="Eichinger L."/>
            <person name="Pachebat J.A."/>
            <person name="Gloeckner G."/>
            <person name="Rajandream M.A."/>
            <person name="Sucgang R."/>
            <person name="Berriman M."/>
            <person name="Song J."/>
            <person name="Olsen R."/>
            <person name="Szafranski K."/>
            <person name="Xu Q."/>
            <person name="Tunggal B."/>
            <person name="Kummerfeld S."/>
            <person name="Madera M."/>
            <person name="Konfortov B.A."/>
            <person name="Rivero F."/>
            <person name="Bankier A.T."/>
            <person name="Lehmann R."/>
            <person name="Hamlin N."/>
            <person name="Davies R."/>
            <person name="Gaudet P."/>
            <person name="Fey P."/>
            <person name="Pilcher K."/>
            <person name="Chen G."/>
            <person name="Saunders D."/>
            <person name="Sodergren E.J."/>
            <person name="Davis P."/>
            <person name="Kerhornou A."/>
            <person name="Nie X."/>
            <person name="Hall N."/>
            <person name="Anjard C."/>
            <person name="Hemphill L."/>
            <person name="Bason N."/>
            <person name="Farbrother P."/>
            <person name="Desany B."/>
            <person name="Just E."/>
            <person name="Morio T."/>
            <person name="Rost R."/>
            <person name="Churcher C.M."/>
            <person name="Cooper J."/>
            <person name="Haydock S."/>
            <person name="van Driessche N."/>
            <person name="Cronin A."/>
            <person name="Goodhead I."/>
            <person name="Muzny D.M."/>
            <person name="Mourier T."/>
            <person name="Pain A."/>
            <person name="Lu M."/>
            <person name="Harper D."/>
            <person name="Lindsay R."/>
            <person name="Hauser H."/>
            <person name="James K.D."/>
            <person name="Quiles M."/>
            <person name="Madan Babu M."/>
            <person name="Saito T."/>
            <person name="Buchrieser C."/>
            <person name="Wardroper A."/>
            <person name="Felder M."/>
            <person name="Thangavelu M."/>
            <person name="Johnson D."/>
            <person name="Knights A."/>
            <person name="Loulseged H."/>
            <person name="Mungall K.L."/>
            <person name="Oliver K."/>
            <person name="Price C."/>
            <person name="Quail M.A."/>
            <person name="Urushihara H."/>
            <person name="Hernandez J."/>
            <person name="Rabbinowitsch E."/>
            <person name="Steffen D."/>
            <person name="Sanders M."/>
            <person name="Ma J."/>
            <person name="Kohara Y."/>
            <person name="Sharp S."/>
            <person name="Simmonds M.N."/>
            <person name="Spiegler S."/>
            <person name="Tivey A."/>
            <person name="Sugano S."/>
            <person name="White B."/>
            <person name="Walker D."/>
            <person name="Woodward J.R."/>
            <person name="Winckler T."/>
            <person name="Tanaka Y."/>
            <person name="Shaulsky G."/>
            <person name="Schleicher M."/>
            <person name="Weinstock G.M."/>
            <person name="Rosenthal A."/>
            <person name="Cox E.C."/>
            <person name="Chisholm R.L."/>
            <person name="Gibbs R.A."/>
            <person name="Loomis W.F."/>
            <person name="Platzer M."/>
            <person name="Kay R.R."/>
            <person name="Williams J.G."/>
            <person name="Dear P.H."/>
            <person name="Noegel A.A."/>
            <person name="Barrell B.G."/>
            <person name="Kuspa A."/>
        </authorList>
    </citation>
    <scope>NUCLEOTIDE SEQUENCE [LARGE SCALE GENOMIC DNA]</scope>
    <source>
        <strain>AX4</strain>
    </source>
</reference>
<reference key="2">
    <citation type="journal article" date="2000" name="J. Biol. Chem.">
        <title>A syntaxin 7 homologue is present in Dictyostelium discoideum endosomes and controls their homotypic fusion.</title>
        <authorList>
            <person name="Bogdanovic A."/>
            <person name="Bruckert F."/>
            <person name="Morio T."/>
            <person name="Satre M."/>
        </authorList>
    </citation>
    <scope>FUNCTION</scope>
    <scope>SUBCELLULAR LOCATION</scope>
    <scope>INTERACTION WITH NSFA; SNPA AND SNPC</scope>
</reference>
<reference evidence="7" key="3">
    <citation type="journal article" date="2002" name="Biochem. J.">
        <title>Syntaxin 7, syntaxin 8, Vti1 and VAMP7 (vesicle-associated membrane protein 7) form an active SNARE complex for early macropinocytic compartment fusion in Dictyostelium discoideum.</title>
        <authorList>
            <person name="Bogdanovic A."/>
            <person name="Bennett N."/>
            <person name="Kieffer S."/>
            <person name="Louwagie M."/>
            <person name="Morio T."/>
            <person name="Garin J."/>
            <person name="Satre M."/>
            <person name="Bruckert F."/>
        </authorList>
    </citation>
    <scope>FUNCTION</scope>
    <scope>IDENTIFICATION IN SNARE COMPLEX</scope>
    <scope>SUBCELLULAR LOCATION</scope>
</reference>
<proteinExistence type="evidence at protein level"/>
<feature type="chain" id="PRO_0000319997" description="Syntaxin-7A">
    <location>
        <begin position="1"/>
        <end position="356"/>
    </location>
</feature>
<feature type="topological domain" description="Cytoplasmic" evidence="2">
    <location>
        <begin position="1"/>
        <end position="333"/>
    </location>
</feature>
<feature type="transmembrane region" description="Helical; Anchor for type IV membrane protein">
    <location>
        <begin position="334"/>
        <end position="354"/>
    </location>
</feature>
<feature type="topological domain" description="Vesicular" evidence="1 2">
    <location>
        <begin position="355"/>
        <end position="356"/>
    </location>
</feature>
<feature type="domain" description="t-SNARE coiled-coil homology" evidence="3">
    <location>
        <begin position="259"/>
        <end position="321"/>
    </location>
</feature>
<feature type="region of interest" description="Disordered" evidence="4">
    <location>
        <begin position="32"/>
        <end position="88"/>
    </location>
</feature>
<feature type="region of interest" description="Disordered" evidence="4">
    <location>
        <begin position="187"/>
        <end position="247"/>
    </location>
</feature>
<feature type="compositionally biased region" description="Low complexity" evidence="4">
    <location>
        <begin position="32"/>
        <end position="74"/>
    </location>
</feature>
<feature type="compositionally biased region" description="Low complexity" evidence="4">
    <location>
        <begin position="207"/>
        <end position="224"/>
    </location>
</feature>
<feature type="compositionally biased region" description="Basic and acidic residues" evidence="4">
    <location>
        <begin position="233"/>
        <end position="244"/>
    </location>
</feature>
<protein>
    <recommendedName>
        <fullName>Syntaxin-7A</fullName>
    </recommendedName>
</protein>